<name>PFKA_SHIFL</name>
<gene>
    <name evidence="1" type="primary">pfkA</name>
    <name type="ordered locus">SF3994</name>
    <name type="ordered locus">S3753</name>
</gene>
<protein>
    <recommendedName>
        <fullName evidence="1">ATP-dependent 6-phosphofructokinase isozyme 1</fullName>
        <shortName evidence="1">ATP-PFK 1</shortName>
        <shortName evidence="1">Phosphofructokinase 1</shortName>
        <ecNumber evidence="1">2.7.1.11</ecNumber>
    </recommendedName>
    <alternativeName>
        <fullName>6-phosphofructokinase isozyme I</fullName>
    </alternativeName>
    <alternativeName>
        <fullName evidence="1">Phosphohexokinase 1</fullName>
    </alternativeName>
</protein>
<feature type="chain" id="PRO_0000111974" description="ATP-dependent 6-phosphofructokinase isozyme 1">
    <location>
        <begin position="1"/>
        <end position="320"/>
    </location>
</feature>
<feature type="active site" description="Proton acceptor" evidence="1">
    <location>
        <position position="128"/>
    </location>
</feature>
<feature type="binding site" evidence="1">
    <location>
        <position position="12"/>
    </location>
    <ligand>
        <name>ATP</name>
        <dbReference type="ChEBI" id="CHEBI:30616"/>
    </ligand>
</feature>
<feature type="binding site" evidence="1">
    <location>
        <begin position="22"/>
        <end position="26"/>
    </location>
    <ligand>
        <name>ADP</name>
        <dbReference type="ChEBI" id="CHEBI:456216"/>
        <note>allosteric activator; ligand shared between dimeric partners</note>
    </ligand>
</feature>
<feature type="binding site" evidence="1">
    <location>
        <begin position="55"/>
        <end position="60"/>
    </location>
    <ligand>
        <name>ADP</name>
        <dbReference type="ChEBI" id="CHEBI:456216"/>
        <note>allosteric activator; ligand shared between dimeric partners</note>
    </ligand>
</feature>
<feature type="binding site" evidence="1">
    <location>
        <begin position="73"/>
        <end position="74"/>
    </location>
    <ligand>
        <name>ATP</name>
        <dbReference type="ChEBI" id="CHEBI:30616"/>
    </ligand>
</feature>
<feature type="binding site" evidence="1">
    <location>
        <begin position="103"/>
        <end position="106"/>
    </location>
    <ligand>
        <name>ATP</name>
        <dbReference type="ChEBI" id="CHEBI:30616"/>
    </ligand>
</feature>
<feature type="binding site" evidence="1">
    <location>
        <position position="104"/>
    </location>
    <ligand>
        <name>Mg(2+)</name>
        <dbReference type="ChEBI" id="CHEBI:18420"/>
        <note>catalytic</note>
    </ligand>
</feature>
<feature type="binding site" description="in other chain" evidence="1">
    <location>
        <begin position="126"/>
        <end position="128"/>
    </location>
    <ligand>
        <name>substrate</name>
        <note>ligand shared between dimeric partners</note>
    </ligand>
</feature>
<feature type="binding site" description="in other chain" evidence="1">
    <location>
        <position position="155"/>
    </location>
    <ligand>
        <name>ADP</name>
        <dbReference type="ChEBI" id="CHEBI:456216"/>
        <note>allosteric activator; ligand shared between dimeric partners</note>
    </ligand>
</feature>
<feature type="binding site" evidence="1">
    <location>
        <position position="163"/>
    </location>
    <ligand>
        <name>substrate</name>
        <note>ligand shared between dimeric partners</note>
    </ligand>
</feature>
<feature type="binding site" description="in other chain" evidence="1">
    <location>
        <begin position="170"/>
        <end position="172"/>
    </location>
    <ligand>
        <name>substrate</name>
        <note>ligand shared between dimeric partners</note>
    </ligand>
</feature>
<feature type="binding site" description="in other chain" evidence="1">
    <location>
        <begin position="186"/>
        <end position="188"/>
    </location>
    <ligand>
        <name>ADP</name>
        <dbReference type="ChEBI" id="CHEBI:456216"/>
        <note>allosteric activator; ligand shared between dimeric partners</note>
    </ligand>
</feature>
<feature type="binding site" description="in other chain" evidence="1">
    <location>
        <position position="212"/>
    </location>
    <ligand>
        <name>ADP</name>
        <dbReference type="ChEBI" id="CHEBI:456216"/>
        <note>allosteric activator; ligand shared between dimeric partners</note>
    </ligand>
</feature>
<feature type="binding site" description="in other chain" evidence="1">
    <location>
        <begin position="214"/>
        <end position="216"/>
    </location>
    <ligand>
        <name>ADP</name>
        <dbReference type="ChEBI" id="CHEBI:456216"/>
        <note>allosteric activator; ligand shared between dimeric partners</note>
    </ligand>
</feature>
<feature type="binding site" description="in other chain" evidence="1">
    <location>
        <position position="223"/>
    </location>
    <ligand>
        <name>substrate</name>
        <note>ligand shared between dimeric partners</note>
    </ligand>
</feature>
<feature type="binding site" evidence="1">
    <location>
        <position position="244"/>
    </location>
    <ligand>
        <name>substrate</name>
        <note>ligand shared between dimeric partners</note>
    </ligand>
</feature>
<feature type="binding site" description="in other chain" evidence="1">
    <location>
        <begin position="250"/>
        <end position="253"/>
    </location>
    <ligand>
        <name>substrate</name>
        <note>ligand shared between dimeric partners</note>
    </ligand>
</feature>
<sequence>MIKKIGVLTSGGDAPGMNAAIRGVVRSALTEGLEVMGIYDGYLGLYEDRMVQLDRYSVSDMINRGGTFLGSARFPEFRDENIRAVAIENLKKRGIDALVVIGGDGSYMGAMRLTEMGFPCIGLPGTIDNDIKGTDYTIGFFTALSTVVEAIDRLRDTSSSHQRISVVEVMGRYCGDLTLAAAIAGGCEFVVVPEVEFSREDLVNEIKAGIAKGKKHAIVAITEHMCDVDELAHFIEKETGRETRATVLGHIQRGGSPVPYDRILASRMGAYAIDLLLAGYGGRCVGIQNEQLVHHDIIDAIENMKRPFKGDWLDCAKKLY</sequence>
<accession>P0A798</accession>
<accession>P06998</accession>
<keyword id="KW-0021">Allosteric enzyme</keyword>
<keyword id="KW-0067">ATP-binding</keyword>
<keyword id="KW-0963">Cytoplasm</keyword>
<keyword id="KW-0324">Glycolysis</keyword>
<keyword id="KW-0418">Kinase</keyword>
<keyword id="KW-0460">Magnesium</keyword>
<keyword id="KW-0479">Metal-binding</keyword>
<keyword id="KW-0547">Nucleotide-binding</keyword>
<keyword id="KW-1185">Reference proteome</keyword>
<keyword id="KW-0808">Transferase</keyword>
<proteinExistence type="inferred from homology"/>
<dbReference type="EC" id="2.7.1.11" evidence="1"/>
<dbReference type="EMBL" id="AE005674">
    <property type="protein sequence ID" value="AAN45428.2"/>
    <property type="status" value="ALT_INIT"/>
    <property type="molecule type" value="Genomic_DNA"/>
</dbReference>
<dbReference type="EMBL" id="AE014073">
    <property type="protein sequence ID" value="AAP18772.1"/>
    <property type="status" value="ALT_INIT"/>
    <property type="molecule type" value="Genomic_DNA"/>
</dbReference>
<dbReference type="RefSeq" id="NP_709721.2">
    <property type="nucleotide sequence ID" value="NC_004337.2"/>
</dbReference>
<dbReference type="RefSeq" id="WP_000591795.1">
    <property type="nucleotide sequence ID" value="NZ_WPGW01000012.1"/>
</dbReference>
<dbReference type="SMR" id="P0A798"/>
<dbReference type="STRING" id="198214.SF3994"/>
<dbReference type="PaxDb" id="198214-SF3994"/>
<dbReference type="GeneID" id="1026924"/>
<dbReference type="GeneID" id="93777982"/>
<dbReference type="KEGG" id="sfl:SF3994"/>
<dbReference type="KEGG" id="sfx:S3753"/>
<dbReference type="PATRIC" id="fig|198214.7.peg.4706"/>
<dbReference type="HOGENOM" id="CLU_020655_0_1_6"/>
<dbReference type="UniPathway" id="UPA00109">
    <property type="reaction ID" value="UER00182"/>
</dbReference>
<dbReference type="Proteomes" id="UP000001006">
    <property type="component" value="Chromosome"/>
</dbReference>
<dbReference type="Proteomes" id="UP000002673">
    <property type="component" value="Chromosome"/>
</dbReference>
<dbReference type="GO" id="GO:0005945">
    <property type="term" value="C:6-phosphofructokinase complex"/>
    <property type="evidence" value="ECO:0007669"/>
    <property type="project" value="TreeGrafter"/>
</dbReference>
<dbReference type="GO" id="GO:0003872">
    <property type="term" value="F:6-phosphofructokinase activity"/>
    <property type="evidence" value="ECO:0007669"/>
    <property type="project" value="UniProtKB-UniRule"/>
</dbReference>
<dbReference type="GO" id="GO:0016208">
    <property type="term" value="F:AMP binding"/>
    <property type="evidence" value="ECO:0007669"/>
    <property type="project" value="TreeGrafter"/>
</dbReference>
<dbReference type="GO" id="GO:0005524">
    <property type="term" value="F:ATP binding"/>
    <property type="evidence" value="ECO:0007669"/>
    <property type="project" value="UniProtKB-KW"/>
</dbReference>
<dbReference type="GO" id="GO:0070095">
    <property type="term" value="F:fructose-6-phosphate binding"/>
    <property type="evidence" value="ECO:0007669"/>
    <property type="project" value="TreeGrafter"/>
</dbReference>
<dbReference type="GO" id="GO:0042802">
    <property type="term" value="F:identical protein binding"/>
    <property type="evidence" value="ECO:0007669"/>
    <property type="project" value="TreeGrafter"/>
</dbReference>
<dbReference type="GO" id="GO:0046872">
    <property type="term" value="F:metal ion binding"/>
    <property type="evidence" value="ECO:0007669"/>
    <property type="project" value="UniProtKB-KW"/>
</dbReference>
<dbReference type="GO" id="GO:0048029">
    <property type="term" value="F:monosaccharide binding"/>
    <property type="evidence" value="ECO:0007669"/>
    <property type="project" value="TreeGrafter"/>
</dbReference>
<dbReference type="GO" id="GO:0061621">
    <property type="term" value="P:canonical glycolysis"/>
    <property type="evidence" value="ECO:0007669"/>
    <property type="project" value="TreeGrafter"/>
</dbReference>
<dbReference type="GO" id="GO:0030388">
    <property type="term" value="P:fructose 1,6-bisphosphate metabolic process"/>
    <property type="evidence" value="ECO:0007669"/>
    <property type="project" value="TreeGrafter"/>
</dbReference>
<dbReference type="GO" id="GO:0006002">
    <property type="term" value="P:fructose 6-phosphate metabolic process"/>
    <property type="evidence" value="ECO:0007669"/>
    <property type="project" value="InterPro"/>
</dbReference>
<dbReference type="CDD" id="cd00763">
    <property type="entry name" value="Bacterial_PFK"/>
    <property type="match status" value="1"/>
</dbReference>
<dbReference type="FunFam" id="3.40.50.450:FF:000001">
    <property type="entry name" value="ATP-dependent 6-phosphofructokinase"/>
    <property type="match status" value="1"/>
</dbReference>
<dbReference type="FunFam" id="3.40.50.460:FF:000002">
    <property type="entry name" value="ATP-dependent 6-phosphofructokinase"/>
    <property type="match status" value="1"/>
</dbReference>
<dbReference type="Gene3D" id="3.40.50.450">
    <property type="match status" value="1"/>
</dbReference>
<dbReference type="Gene3D" id="3.40.50.460">
    <property type="entry name" value="Phosphofructokinase domain"/>
    <property type="match status" value="1"/>
</dbReference>
<dbReference type="HAMAP" id="MF_00339">
    <property type="entry name" value="Phosphofructokinase_I_B1"/>
    <property type="match status" value="1"/>
</dbReference>
<dbReference type="InterPro" id="IPR022953">
    <property type="entry name" value="ATP_PFK"/>
</dbReference>
<dbReference type="InterPro" id="IPR012003">
    <property type="entry name" value="ATP_PFK_prok-type"/>
</dbReference>
<dbReference type="InterPro" id="IPR012828">
    <property type="entry name" value="PFKA_ATP_prok"/>
</dbReference>
<dbReference type="InterPro" id="IPR015912">
    <property type="entry name" value="Phosphofructokinase_CS"/>
</dbReference>
<dbReference type="InterPro" id="IPR000023">
    <property type="entry name" value="Phosphofructokinase_dom"/>
</dbReference>
<dbReference type="InterPro" id="IPR035966">
    <property type="entry name" value="PKF_sf"/>
</dbReference>
<dbReference type="NCBIfam" id="TIGR02482">
    <property type="entry name" value="PFKA_ATP"/>
    <property type="match status" value="1"/>
</dbReference>
<dbReference type="NCBIfam" id="NF002872">
    <property type="entry name" value="PRK03202.1"/>
    <property type="match status" value="1"/>
</dbReference>
<dbReference type="PANTHER" id="PTHR13697:SF4">
    <property type="entry name" value="ATP-DEPENDENT 6-PHOSPHOFRUCTOKINASE"/>
    <property type="match status" value="1"/>
</dbReference>
<dbReference type="PANTHER" id="PTHR13697">
    <property type="entry name" value="PHOSPHOFRUCTOKINASE"/>
    <property type="match status" value="1"/>
</dbReference>
<dbReference type="Pfam" id="PF00365">
    <property type="entry name" value="PFK"/>
    <property type="match status" value="1"/>
</dbReference>
<dbReference type="PIRSF" id="PIRSF000532">
    <property type="entry name" value="ATP_PFK_prok"/>
    <property type="match status" value="1"/>
</dbReference>
<dbReference type="PRINTS" id="PR00476">
    <property type="entry name" value="PHFRCTKINASE"/>
</dbReference>
<dbReference type="SUPFAM" id="SSF53784">
    <property type="entry name" value="Phosphofructokinase"/>
    <property type="match status" value="1"/>
</dbReference>
<dbReference type="PROSITE" id="PS00433">
    <property type="entry name" value="PHOSPHOFRUCTOKINASE"/>
    <property type="match status" value="1"/>
</dbReference>
<organism>
    <name type="scientific">Shigella flexneri</name>
    <dbReference type="NCBI Taxonomy" id="623"/>
    <lineage>
        <taxon>Bacteria</taxon>
        <taxon>Pseudomonadati</taxon>
        <taxon>Pseudomonadota</taxon>
        <taxon>Gammaproteobacteria</taxon>
        <taxon>Enterobacterales</taxon>
        <taxon>Enterobacteriaceae</taxon>
        <taxon>Shigella</taxon>
    </lineage>
</organism>
<comment type="function">
    <text evidence="1">Catalyzes the phosphorylation of D-fructose 6-phosphate to fructose 1,6-bisphosphate by ATP, the first committing step of glycolysis.</text>
</comment>
<comment type="catalytic activity">
    <reaction evidence="1">
        <text>beta-D-fructose 6-phosphate + ATP = beta-D-fructose 1,6-bisphosphate + ADP + H(+)</text>
        <dbReference type="Rhea" id="RHEA:16109"/>
        <dbReference type="ChEBI" id="CHEBI:15378"/>
        <dbReference type="ChEBI" id="CHEBI:30616"/>
        <dbReference type="ChEBI" id="CHEBI:32966"/>
        <dbReference type="ChEBI" id="CHEBI:57634"/>
        <dbReference type="ChEBI" id="CHEBI:456216"/>
        <dbReference type="EC" id="2.7.1.11"/>
    </reaction>
</comment>
<comment type="cofactor">
    <cofactor evidence="1">
        <name>Mg(2+)</name>
        <dbReference type="ChEBI" id="CHEBI:18420"/>
    </cofactor>
</comment>
<comment type="activity regulation">
    <text evidence="1">Allosterically activated by ADP and other diphosphonucleosides, and allosterically inhibited by phosphoenolpyruvate.</text>
</comment>
<comment type="pathway">
    <text evidence="1">Carbohydrate degradation; glycolysis; D-glyceraldehyde 3-phosphate and glycerone phosphate from D-glucose: step 3/4.</text>
</comment>
<comment type="subunit">
    <text evidence="1">Homotetramer.</text>
</comment>
<comment type="subcellular location">
    <subcellularLocation>
        <location evidence="1">Cytoplasm</location>
    </subcellularLocation>
</comment>
<comment type="similarity">
    <text evidence="1">Belongs to the phosphofructokinase type A (PFKA) family. ATP-dependent PFK group I subfamily. Prokaryotic clade 'B1' sub-subfamily.</text>
</comment>
<comment type="sequence caution" evidence="2">
    <conflict type="erroneous initiation">
        <sequence resource="EMBL-CDS" id="AAN45428"/>
    </conflict>
    <text>Truncated N-terminus.</text>
</comment>
<comment type="sequence caution" evidence="2">
    <conflict type="erroneous initiation">
        <sequence resource="EMBL-CDS" id="AAP18772"/>
    </conflict>
    <text>Truncated N-terminus.</text>
</comment>
<reference key="1">
    <citation type="journal article" date="2002" name="Nucleic Acids Res.">
        <title>Genome sequence of Shigella flexneri 2a: insights into pathogenicity through comparison with genomes of Escherichia coli K12 and O157.</title>
        <authorList>
            <person name="Jin Q."/>
            <person name="Yuan Z."/>
            <person name="Xu J."/>
            <person name="Wang Y."/>
            <person name="Shen Y."/>
            <person name="Lu W."/>
            <person name="Wang J."/>
            <person name="Liu H."/>
            <person name="Yang J."/>
            <person name="Yang F."/>
            <person name="Zhang X."/>
            <person name="Zhang J."/>
            <person name="Yang G."/>
            <person name="Wu H."/>
            <person name="Qu D."/>
            <person name="Dong J."/>
            <person name="Sun L."/>
            <person name="Xue Y."/>
            <person name="Zhao A."/>
            <person name="Gao Y."/>
            <person name="Zhu J."/>
            <person name="Kan B."/>
            <person name="Ding K."/>
            <person name="Chen S."/>
            <person name="Cheng H."/>
            <person name="Yao Z."/>
            <person name="He B."/>
            <person name="Chen R."/>
            <person name="Ma D."/>
            <person name="Qiang B."/>
            <person name="Wen Y."/>
            <person name="Hou Y."/>
            <person name="Yu J."/>
        </authorList>
    </citation>
    <scope>NUCLEOTIDE SEQUENCE [LARGE SCALE GENOMIC DNA]</scope>
    <source>
        <strain>301 / Serotype 2a</strain>
    </source>
</reference>
<reference key="2">
    <citation type="journal article" date="2003" name="Infect. Immun.">
        <title>Complete genome sequence and comparative genomics of Shigella flexneri serotype 2a strain 2457T.</title>
        <authorList>
            <person name="Wei J."/>
            <person name="Goldberg M.B."/>
            <person name="Burland V."/>
            <person name="Venkatesan M.M."/>
            <person name="Deng W."/>
            <person name="Fournier G."/>
            <person name="Mayhew G.F."/>
            <person name="Plunkett G. III"/>
            <person name="Rose D.J."/>
            <person name="Darling A."/>
            <person name="Mau B."/>
            <person name="Perna N.T."/>
            <person name="Payne S.M."/>
            <person name="Runyen-Janecky L.J."/>
            <person name="Zhou S."/>
            <person name="Schwartz D.C."/>
            <person name="Blattner F.R."/>
        </authorList>
    </citation>
    <scope>NUCLEOTIDE SEQUENCE [LARGE SCALE GENOMIC DNA]</scope>
    <source>
        <strain>ATCC 700930 / 2457T / Serotype 2a</strain>
    </source>
</reference>
<evidence type="ECO:0000255" key="1">
    <source>
        <dbReference type="HAMAP-Rule" id="MF_00339"/>
    </source>
</evidence>
<evidence type="ECO:0000305" key="2"/>